<keyword id="KW-0997">Cell inner membrane</keyword>
<keyword id="KW-1003">Cell membrane</keyword>
<keyword id="KW-0472">Membrane</keyword>
<keyword id="KW-0808">Transferase</keyword>
<keyword id="KW-0812">Transmembrane</keyword>
<keyword id="KW-1133">Transmembrane helix</keyword>
<evidence type="ECO:0000255" key="1">
    <source>
        <dbReference type="HAMAP-Rule" id="MF_01147"/>
    </source>
</evidence>
<protein>
    <recommendedName>
        <fullName evidence="1">Phosphatidylglycerol--prolipoprotein diacylglyceryl transferase</fullName>
        <ecNumber evidence="1">2.5.1.145</ecNumber>
    </recommendedName>
</protein>
<reference key="1">
    <citation type="journal article" date="2005" name="Jpn. Agric. Res. Q.">
        <title>Genome sequence of Xanthomonas oryzae pv. oryzae suggests contribution of large numbers of effector genes and insertion sequences to its race diversity.</title>
        <authorList>
            <person name="Ochiai H."/>
            <person name="Inoue Y."/>
            <person name="Takeya M."/>
            <person name="Sasaki A."/>
            <person name="Kaku H."/>
        </authorList>
    </citation>
    <scope>NUCLEOTIDE SEQUENCE [LARGE SCALE GENOMIC DNA]</scope>
    <source>
        <strain>MAFF 311018</strain>
    </source>
</reference>
<dbReference type="EC" id="2.5.1.145" evidence="1"/>
<dbReference type="EMBL" id="AP008229">
    <property type="protein sequence ID" value="BAE70299.1"/>
    <property type="molecule type" value="Genomic_DNA"/>
</dbReference>
<dbReference type="RefSeq" id="WP_011260173.1">
    <property type="nucleotide sequence ID" value="NC_007705.1"/>
</dbReference>
<dbReference type="SMR" id="Q2NZH8"/>
<dbReference type="KEGG" id="xom:XOO3544"/>
<dbReference type="HOGENOM" id="CLU_013386_1_0_6"/>
<dbReference type="UniPathway" id="UPA00664"/>
<dbReference type="GO" id="GO:0005886">
    <property type="term" value="C:plasma membrane"/>
    <property type="evidence" value="ECO:0007669"/>
    <property type="project" value="UniProtKB-SubCell"/>
</dbReference>
<dbReference type="GO" id="GO:0008961">
    <property type="term" value="F:phosphatidylglycerol-prolipoprotein diacylglyceryl transferase activity"/>
    <property type="evidence" value="ECO:0007669"/>
    <property type="project" value="UniProtKB-UniRule"/>
</dbReference>
<dbReference type="GO" id="GO:0042158">
    <property type="term" value="P:lipoprotein biosynthetic process"/>
    <property type="evidence" value="ECO:0007669"/>
    <property type="project" value="UniProtKB-UniRule"/>
</dbReference>
<dbReference type="HAMAP" id="MF_01147">
    <property type="entry name" value="Lgt"/>
    <property type="match status" value="1"/>
</dbReference>
<dbReference type="InterPro" id="IPR001640">
    <property type="entry name" value="Lgt"/>
</dbReference>
<dbReference type="NCBIfam" id="TIGR00544">
    <property type="entry name" value="lgt"/>
    <property type="match status" value="1"/>
</dbReference>
<dbReference type="PANTHER" id="PTHR30589:SF0">
    <property type="entry name" value="PHOSPHATIDYLGLYCEROL--PROLIPOPROTEIN DIACYLGLYCERYL TRANSFERASE"/>
    <property type="match status" value="1"/>
</dbReference>
<dbReference type="PANTHER" id="PTHR30589">
    <property type="entry name" value="PROLIPOPROTEIN DIACYLGLYCERYL TRANSFERASE"/>
    <property type="match status" value="1"/>
</dbReference>
<dbReference type="Pfam" id="PF01790">
    <property type="entry name" value="LGT"/>
    <property type="match status" value="1"/>
</dbReference>
<dbReference type="PROSITE" id="PS01311">
    <property type="entry name" value="LGT"/>
    <property type="match status" value="1"/>
</dbReference>
<name>LGT_XANOM</name>
<gene>
    <name evidence="1" type="primary">lgt</name>
    <name type="ordered locus">XOO3544</name>
</gene>
<feature type="chain" id="PRO_1000053528" description="Phosphatidylglycerol--prolipoprotein diacylglyceryl transferase">
    <location>
        <begin position="1"/>
        <end position="296"/>
    </location>
</feature>
<feature type="transmembrane region" description="Helical" evidence="1">
    <location>
        <begin position="10"/>
        <end position="30"/>
    </location>
</feature>
<feature type="transmembrane region" description="Helical" evidence="1">
    <location>
        <begin position="57"/>
        <end position="77"/>
    </location>
</feature>
<feature type="transmembrane region" description="Helical" evidence="1">
    <location>
        <begin position="92"/>
        <end position="112"/>
    </location>
</feature>
<feature type="transmembrane region" description="Helical" evidence="1">
    <location>
        <begin position="119"/>
        <end position="139"/>
    </location>
</feature>
<feature type="transmembrane region" description="Helical" evidence="1">
    <location>
        <begin position="194"/>
        <end position="214"/>
    </location>
</feature>
<feature type="transmembrane region" description="Helical" evidence="1">
    <location>
        <begin position="220"/>
        <end position="240"/>
    </location>
</feature>
<feature type="transmembrane region" description="Helical" evidence="1">
    <location>
        <begin position="254"/>
        <end position="274"/>
    </location>
</feature>
<feature type="binding site" evidence="1">
    <location>
        <position position="140"/>
    </location>
    <ligand>
        <name>a 1,2-diacyl-sn-glycero-3-phospho-(1'-sn-glycerol)</name>
        <dbReference type="ChEBI" id="CHEBI:64716"/>
    </ligand>
</feature>
<accession>Q2NZH8</accession>
<comment type="function">
    <text evidence="1">Catalyzes the transfer of the diacylglyceryl group from phosphatidylglycerol to the sulfhydryl group of the N-terminal cysteine of a prolipoprotein, the first step in the formation of mature lipoproteins.</text>
</comment>
<comment type="catalytic activity">
    <reaction evidence="1">
        <text>L-cysteinyl-[prolipoprotein] + a 1,2-diacyl-sn-glycero-3-phospho-(1'-sn-glycerol) = an S-1,2-diacyl-sn-glyceryl-L-cysteinyl-[prolipoprotein] + sn-glycerol 1-phosphate + H(+)</text>
        <dbReference type="Rhea" id="RHEA:56712"/>
        <dbReference type="Rhea" id="RHEA-COMP:14679"/>
        <dbReference type="Rhea" id="RHEA-COMP:14680"/>
        <dbReference type="ChEBI" id="CHEBI:15378"/>
        <dbReference type="ChEBI" id="CHEBI:29950"/>
        <dbReference type="ChEBI" id="CHEBI:57685"/>
        <dbReference type="ChEBI" id="CHEBI:64716"/>
        <dbReference type="ChEBI" id="CHEBI:140658"/>
        <dbReference type="EC" id="2.5.1.145"/>
    </reaction>
</comment>
<comment type="pathway">
    <text evidence="1">Protein modification; lipoprotein biosynthesis (diacylglyceryl transfer).</text>
</comment>
<comment type="subcellular location">
    <subcellularLocation>
        <location evidence="1">Cell inner membrane</location>
        <topology evidence="1">Multi-pass membrane protein</topology>
    </subcellularLocation>
</comment>
<comment type="similarity">
    <text evidence="1">Belongs to the Lgt family.</text>
</comment>
<organism>
    <name type="scientific">Xanthomonas oryzae pv. oryzae (strain MAFF 311018)</name>
    <dbReference type="NCBI Taxonomy" id="342109"/>
    <lineage>
        <taxon>Bacteria</taxon>
        <taxon>Pseudomonadati</taxon>
        <taxon>Pseudomonadota</taxon>
        <taxon>Gammaproteobacteria</taxon>
        <taxon>Lysobacterales</taxon>
        <taxon>Lysobacteraceae</taxon>
        <taxon>Xanthomonas</taxon>
    </lineage>
</organism>
<proteinExistence type="inferred from homology"/>
<sequence>MIYLHAIDPIAFSLGPVKVHWYGLMYLAAFFSAWSLGRSRILRGRLPGVDMDGFSDLLFYGMLGVVLGGRIGYMLFYAFETFVANPLILFKVWEGGMSFHGGLLGVLVACWLWARKHRLHFFDVMDFVAPLVPLGLGFGRLGNFVGGELWGKFTQAGWGVIFPHAPELADQLPAQIQAQYAAGALNQLARHPSQLYEAALEGVVMFVVLWTFSMKPRARYALSGLFALLYGVFRFIVEFVRVPDAPIGYLAFNWLTMGQILSLPLIAVGLALLAMSRRAPVLQPVLPTPAGVEAAK</sequence>